<reference key="1">
    <citation type="journal article" date="1999" name="Nature">
        <title>Evidence for lateral gene transfer between Archaea and Bacteria from genome sequence of Thermotoga maritima.</title>
        <authorList>
            <person name="Nelson K.E."/>
            <person name="Clayton R.A."/>
            <person name="Gill S.R."/>
            <person name="Gwinn M.L."/>
            <person name="Dodson R.J."/>
            <person name="Haft D.H."/>
            <person name="Hickey E.K."/>
            <person name="Peterson J.D."/>
            <person name="Nelson W.C."/>
            <person name="Ketchum K.A."/>
            <person name="McDonald L.A."/>
            <person name="Utterback T.R."/>
            <person name="Malek J.A."/>
            <person name="Linher K.D."/>
            <person name="Garrett M.M."/>
            <person name="Stewart A.M."/>
            <person name="Cotton M.D."/>
            <person name="Pratt M.S."/>
            <person name="Phillips C.A."/>
            <person name="Richardson D.L."/>
            <person name="Heidelberg J.F."/>
            <person name="Sutton G.G."/>
            <person name="Fleischmann R.D."/>
            <person name="Eisen J.A."/>
            <person name="White O."/>
            <person name="Salzberg S.L."/>
            <person name="Smith H.O."/>
            <person name="Venter J.C."/>
            <person name="Fraser C.M."/>
        </authorList>
    </citation>
    <scope>NUCLEOTIDE SEQUENCE [LARGE SCALE GENOMIC DNA]</scope>
    <source>
        <strain>ATCC 43589 / DSM 3109 / JCM 10099 / NBRC 100826 / MSB8</strain>
    </source>
</reference>
<reference key="2">
    <citation type="journal article" date="2004" name="J. Biol. Chem.">
        <title>Evolutionary links as revealed by the structure of Thermotoga maritima S-adenosylmethionine decarboxylase.</title>
        <authorList>
            <person name="Toms A.V."/>
            <person name="Kinsland C."/>
            <person name="McCloskey D.E."/>
            <person name="Pegg A.E."/>
            <person name="Ealick S.E."/>
        </authorList>
    </citation>
    <scope>X-RAY CRYSTALLOGRAPHY (1.55 ANGSTROMS) OF WILD-TYPE AND MUTANT ALA-63</scope>
    <scope>SUBUNIT</scope>
    <scope>SELF-PROCESSING</scope>
    <scope>ACTIVE SITES</scope>
    <scope>MUTAGENESIS OF SER-55; SER-63; HIS-68 AND CYS-83</scope>
</reference>
<reference key="3">
    <citation type="submission" date="2005-03" db="PDB data bank">
        <title>Crystal structure of S-adenosylmethionine decarboxylase proenzyme (tm0655) from Thermotoga maritima at 1.2-A resolution.</title>
        <authorList>
            <consortium name="Joint center for structural genomics (JCSG)"/>
        </authorList>
    </citation>
    <scope>X-RAY CRYSTALLOGRAPHY (1.2 ANGSTROMS)</scope>
</reference>
<feature type="chain" id="PRO_0000030123" description="S-adenosylmethionine decarboxylase beta chain" evidence="3">
    <location>
        <begin position="1"/>
        <end position="62"/>
    </location>
</feature>
<feature type="chain" id="PRO_0000030124" description="S-adenosylmethionine decarboxylase alpha chain" evidence="3">
    <location>
        <begin position="63"/>
        <end position="130"/>
    </location>
</feature>
<feature type="active site" description="Schiff-base intermediate with substrate; via pyruvic acid" evidence="1">
    <location>
        <position position="63"/>
    </location>
</feature>
<feature type="active site" description="Proton acceptor; for processing activity" evidence="4">
    <location>
        <position position="68"/>
    </location>
</feature>
<feature type="active site" description="Proton donor; for catalytic activity" evidence="4">
    <location>
        <position position="83"/>
    </location>
</feature>
<feature type="site" description="Cleavage (non-hydrolytic); by autolysis" evidence="3">
    <location>
        <begin position="62"/>
        <end position="63"/>
    </location>
</feature>
<feature type="modified residue" description="Pyruvic acid (Ser); by autocatalysis" evidence="3">
    <location>
        <position position="63"/>
    </location>
</feature>
<feature type="mutagenesis site" description="Cleaves more rapidly than the wild-type." evidence="2">
    <original>S</original>
    <variation>A</variation>
    <location>
        <position position="55"/>
    </location>
</feature>
<feature type="mutagenesis site" description="Loss of processing." evidence="2">
    <original>S</original>
    <variation>A</variation>
    <location>
        <position position="63"/>
    </location>
</feature>
<feature type="mutagenesis site" description="Cleaves much more slowly than the wild-type, but the addition of hydroxylamine which is known to cleave ester bonds leads to the cleavage of this mutant." evidence="2">
    <original>H</original>
    <variation>A</variation>
    <location>
        <position position="68"/>
    </location>
</feature>
<feature type="mutagenesis site" description="Cleaves more rapidly than the wild-type." evidence="2">
    <original>C</original>
    <variation>A</variation>
    <location>
        <position position="83"/>
    </location>
</feature>
<feature type="strand" evidence="5">
    <location>
        <begin position="3"/>
        <end position="14"/>
    </location>
</feature>
<feature type="helix" evidence="5">
    <location>
        <begin position="17"/>
        <end position="20"/>
    </location>
</feature>
<feature type="helix" evidence="5">
    <location>
        <begin position="23"/>
        <end position="37"/>
    </location>
</feature>
<feature type="strand" evidence="5">
    <location>
        <begin position="41"/>
        <end position="48"/>
    </location>
</feature>
<feature type="strand" evidence="5">
    <location>
        <begin position="50"/>
        <end position="52"/>
    </location>
</feature>
<feature type="strand" evidence="5">
    <location>
        <begin position="54"/>
        <end position="60"/>
    </location>
</feature>
<feature type="strand" evidence="5">
    <location>
        <begin position="63"/>
        <end position="70"/>
    </location>
</feature>
<feature type="helix" evidence="5">
    <location>
        <begin position="71"/>
        <end position="73"/>
    </location>
</feature>
<feature type="strand" evidence="5">
    <location>
        <begin position="75"/>
        <end position="84"/>
    </location>
</feature>
<feature type="helix" evidence="5">
    <location>
        <begin position="89"/>
        <end position="100"/>
    </location>
</feature>
<feature type="strand" evidence="5">
    <location>
        <begin position="103"/>
        <end position="114"/>
    </location>
</feature>
<feature type="helix" evidence="5">
    <location>
        <begin position="115"/>
        <end position="118"/>
    </location>
</feature>
<accession>Q9WZC3</accession>
<proteinExistence type="evidence at protein level"/>
<organism>
    <name type="scientific">Thermotoga maritima (strain ATCC 43589 / DSM 3109 / JCM 10099 / NBRC 100826 / MSB8)</name>
    <dbReference type="NCBI Taxonomy" id="243274"/>
    <lineage>
        <taxon>Bacteria</taxon>
        <taxon>Thermotogati</taxon>
        <taxon>Thermotogota</taxon>
        <taxon>Thermotogae</taxon>
        <taxon>Thermotogales</taxon>
        <taxon>Thermotogaceae</taxon>
        <taxon>Thermotoga</taxon>
    </lineage>
</organism>
<comment type="function">
    <text evidence="1">Catalyzes the decarboxylation of S-adenosylmethionine to S-adenosylmethioninamine (dcAdoMet), the propylamine donor required for the synthesis of the polyamines spermine and spermidine from the diamine putrescine.</text>
</comment>
<comment type="catalytic activity">
    <reaction>
        <text>S-adenosyl-L-methionine + H(+) = S-adenosyl 3-(methylsulfanyl)propylamine + CO2</text>
        <dbReference type="Rhea" id="RHEA:15981"/>
        <dbReference type="ChEBI" id="CHEBI:15378"/>
        <dbReference type="ChEBI" id="CHEBI:16526"/>
        <dbReference type="ChEBI" id="CHEBI:57443"/>
        <dbReference type="ChEBI" id="CHEBI:59789"/>
        <dbReference type="EC" id="4.1.1.50"/>
    </reaction>
</comment>
<comment type="cofactor">
    <cofactor evidence="3">
        <name>pyruvate</name>
        <dbReference type="ChEBI" id="CHEBI:15361"/>
    </cofactor>
    <text evidence="3">Binds 1 pyruvoyl group covalently per subunit.</text>
</comment>
<comment type="pathway">
    <text>Amine and polyamine biosynthesis; S-adenosylmethioninamine biosynthesis; S-adenosylmethioninamine from S-adenosyl-L-methionine: step 1/1.</text>
</comment>
<comment type="subunit">
    <text evidence="2">Heterotetramer of two alpha and two beta chains arranged as a dimer of alpha/beta heterodimers.</text>
</comment>
<comment type="PTM">
    <text evidence="3">Is synthesized initially as an inactive proenzyme. Formation of the active enzyme involves a self-maturation process in which the active site pyruvoyl group is generated from an internal serine residue via an autocatalytic post-translational modification. Two non-identical subunits are generated from the proenzyme in this reaction, and the pyruvate is formed at the N-terminus of the alpha chain, which is derived from the carboxyl end of the proenzyme. The post-translation cleavage follows an unusual pathway, termed non-hydrolytic serinolysis, in which the side chain hydroxyl group of the serine supplies its oxygen atom to form the C-terminus of the beta chain, while the remainder of the serine residue undergoes an oxidative deamination to produce ammonia and the pyruvoyl group blocking the N-terminus of the alpha chain (Probable).</text>
</comment>
<comment type="similarity">
    <text evidence="3">Belongs to the prokaryotic AdoMetDC family. Type 1 subfamily.</text>
</comment>
<gene>
    <name type="primary">speH</name>
    <name type="ordered locus">TM_0655</name>
</gene>
<evidence type="ECO:0000250" key="1"/>
<evidence type="ECO:0000269" key="2">
    <source>
    </source>
</evidence>
<evidence type="ECO:0000305" key="3"/>
<evidence type="ECO:0000305" key="4">
    <source>
    </source>
</evidence>
<evidence type="ECO:0007829" key="5">
    <source>
        <dbReference type="PDB" id="1VR7"/>
    </source>
</evidence>
<protein>
    <recommendedName>
        <fullName>S-adenosylmethionine decarboxylase proenzyme</fullName>
        <shortName>AdoMetDC</shortName>
        <shortName>SAMDC</shortName>
        <ecNumber>4.1.1.50</ecNumber>
    </recommendedName>
    <component>
        <recommendedName>
            <fullName>S-adenosylmethionine decarboxylase beta chain</fullName>
        </recommendedName>
    </component>
    <component>
        <recommendedName>
            <fullName>S-adenosylmethionine decarboxylase alpha chain</fullName>
        </recommendedName>
    </component>
</protein>
<sequence>MKSLGRHLVAEFYECDREVLDNVQLIEQEMKQAAYESGATIVTSTFHRFLPYGVSGVVVISESHLTIHTWPEYGYAAIDLFTCGEDVDPWKAFEHLKKALKAKRVHVVEHERGRYDEIGIPEDSPHKAAV</sequence>
<dbReference type="EC" id="4.1.1.50"/>
<dbReference type="EMBL" id="AE000512">
    <property type="protein sequence ID" value="AAD35739.1"/>
    <property type="molecule type" value="Genomic_DNA"/>
</dbReference>
<dbReference type="PIR" id="D72348">
    <property type="entry name" value="D72348"/>
</dbReference>
<dbReference type="RefSeq" id="NP_228464.1">
    <property type="nucleotide sequence ID" value="NC_000853.1"/>
</dbReference>
<dbReference type="RefSeq" id="WP_004081137.1">
    <property type="nucleotide sequence ID" value="NC_000853.1"/>
</dbReference>
<dbReference type="PDB" id="1TLU">
    <property type="method" value="X-ray"/>
    <property type="resolution" value="1.55 A"/>
    <property type="chains" value="A/B=1-130"/>
</dbReference>
<dbReference type="PDB" id="1TMI">
    <property type="method" value="X-ray"/>
    <property type="resolution" value="1.70 A"/>
    <property type="chains" value="A/B=1-130"/>
</dbReference>
<dbReference type="PDB" id="1VR7">
    <property type="method" value="X-ray"/>
    <property type="resolution" value="1.20 A"/>
    <property type="chains" value="A/B=1-130"/>
</dbReference>
<dbReference type="PDB" id="3IWB">
    <property type="method" value="X-ray"/>
    <property type="resolution" value="2.06 A"/>
    <property type="chains" value="A/C=64-130, B/D=1-62"/>
</dbReference>
<dbReference type="PDB" id="3IWC">
    <property type="method" value="X-ray"/>
    <property type="resolution" value="1.90 A"/>
    <property type="chains" value="A/C=64-130, B/D=1-62"/>
</dbReference>
<dbReference type="PDB" id="3IWD">
    <property type="method" value="X-ray"/>
    <property type="resolution" value="1.90 A"/>
    <property type="chains" value="A/C=64-130, B/D=1-62"/>
</dbReference>
<dbReference type="PDBsum" id="1TLU"/>
<dbReference type="PDBsum" id="1TMI"/>
<dbReference type="PDBsum" id="1VR7"/>
<dbReference type="PDBsum" id="3IWB"/>
<dbReference type="PDBsum" id="3IWC"/>
<dbReference type="PDBsum" id="3IWD"/>
<dbReference type="SMR" id="Q9WZC3"/>
<dbReference type="FunCoup" id="Q9WZC3">
    <property type="interactions" value="30"/>
</dbReference>
<dbReference type="STRING" id="243274.TM_0655"/>
<dbReference type="PaxDb" id="243274-THEMA_01390"/>
<dbReference type="EnsemblBacteria" id="AAD35739">
    <property type="protein sequence ID" value="AAD35739"/>
    <property type="gene ID" value="TM_0655"/>
</dbReference>
<dbReference type="KEGG" id="tma:TM0655"/>
<dbReference type="KEGG" id="tmi:THEMA_01390"/>
<dbReference type="KEGG" id="tmm:Tmari_0655"/>
<dbReference type="KEGG" id="tmw:THMA_0670"/>
<dbReference type="eggNOG" id="COG1586">
    <property type="taxonomic scope" value="Bacteria"/>
</dbReference>
<dbReference type="InParanoid" id="Q9WZC3"/>
<dbReference type="OrthoDB" id="9793120at2"/>
<dbReference type="BRENDA" id="4.1.1.50">
    <property type="organism ID" value="6331"/>
</dbReference>
<dbReference type="UniPathway" id="UPA00331">
    <property type="reaction ID" value="UER00451"/>
</dbReference>
<dbReference type="EvolutionaryTrace" id="Q9WZC3"/>
<dbReference type="Proteomes" id="UP000008183">
    <property type="component" value="Chromosome"/>
</dbReference>
<dbReference type="GO" id="GO:0005829">
    <property type="term" value="C:cytosol"/>
    <property type="evidence" value="ECO:0000318"/>
    <property type="project" value="GO_Central"/>
</dbReference>
<dbReference type="GO" id="GO:0004014">
    <property type="term" value="F:adenosylmethionine decarboxylase activity"/>
    <property type="evidence" value="ECO:0000318"/>
    <property type="project" value="GO_Central"/>
</dbReference>
<dbReference type="GO" id="GO:0008295">
    <property type="term" value="P:spermidine biosynthetic process"/>
    <property type="evidence" value="ECO:0000318"/>
    <property type="project" value="GO_Central"/>
</dbReference>
<dbReference type="FunFam" id="3.30.160.750:FF:000004">
    <property type="entry name" value="S-adenosylmethionine decarboxylase proenzyme"/>
    <property type="match status" value="1"/>
</dbReference>
<dbReference type="FunFam" id="3.30.360.110:FF:000001">
    <property type="entry name" value="S-adenosylmethionine decarboxylase proenzyme"/>
    <property type="match status" value="1"/>
</dbReference>
<dbReference type="Gene3D" id="3.30.160.750">
    <property type="match status" value="1"/>
</dbReference>
<dbReference type="Gene3D" id="3.30.360.110">
    <property type="entry name" value="S-adenosylmethionine decarboxylase domain"/>
    <property type="match status" value="1"/>
</dbReference>
<dbReference type="HAMAP" id="MF_00464">
    <property type="entry name" value="AdoMetDC_1"/>
    <property type="match status" value="1"/>
</dbReference>
<dbReference type="InterPro" id="IPR042286">
    <property type="entry name" value="AdoMetDC_C"/>
</dbReference>
<dbReference type="InterPro" id="IPR003826">
    <property type="entry name" value="AdoMetDC_fam_prok"/>
</dbReference>
<dbReference type="InterPro" id="IPR042284">
    <property type="entry name" value="AdoMetDC_N"/>
</dbReference>
<dbReference type="InterPro" id="IPR016067">
    <property type="entry name" value="S-AdoMet_deCO2ase_core"/>
</dbReference>
<dbReference type="InterPro" id="IPR017716">
    <property type="entry name" value="S-AdoMet_deCOase_pro-enz"/>
</dbReference>
<dbReference type="NCBIfam" id="TIGR03330">
    <property type="entry name" value="SAM_DCase_Bsu"/>
    <property type="match status" value="1"/>
</dbReference>
<dbReference type="PANTHER" id="PTHR33866">
    <property type="entry name" value="S-ADENOSYLMETHIONINE DECARBOXYLASE PROENZYME"/>
    <property type="match status" value="1"/>
</dbReference>
<dbReference type="PANTHER" id="PTHR33866:SF2">
    <property type="entry name" value="S-ADENOSYLMETHIONINE DECARBOXYLASE PROENZYME"/>
    <property type="match status" value="1"/>
</dbReference>
<dbReference type="Pfam" id="PF02675">
    <property type="entry name" value="AdoMet_dc"/>
    <property type="match status" value="1"/>
</dbReference>
<dbReference type="SUPFAM" id="SSF56276">
    <property type="entry name" value="S-adenosylmethionine decarboxylase"/>
    <property type="match status" value="1"/>
</dbReference>
<name>SPEH_THEMA</name>
<keyword id="KW-0002">3D-structure</keyword>
<keyword id="KW-0068">Autocatalytic cleavage</keyword>
<keyword id="KW-0210">Decarboxylase</keyword>
<keyword id="KW-0456">Lyase</keyword>
<keyword id="KW-0620">Polyamine biosynthesis</keyword>
<keyword id="KW-0670">Pyruvate</keyword>
<keyword id="KW-1185">Reference proteome</keyword>
<keyword id="KW-0949">S-adenosyl-L-methionine</keyword>
<keyword id="KW-0704">Schiff base</keyword>
<keyword id="KW-0745">Spermidine biosynthesis</keyword>
<keyword id="KW-0865">Zymogen</keyword>